<dbReference type="EC" id="2.7.7.12" evidence="1"/>
<dbReference type="EMBL" id="CP000425">
    <property type="protein sequence ID" value="ABJ73699.1"/>
    <property type="molecule type" value="Genomic_DNA"/>
</dbReference>
<dbReference type="RefSeq" id="WP_011677034.1">
    <property type="nucleotide sequence ID" value="NC_008527.1"/>
</dbReference>
<dbReference type="KEGG" id="llc:LACR_2243"/>
<dbReference type="HOGENOM" id="CLU_047799_0_0_9"/>
<dbReference type="UniPathway" id="UPA00214"/>
<dbReference type="Proteomes" id="UP000000240">
    <property type="component" value="Chromosome"/>
</dbReference>
<dbReference type="GO" id="GO:0005737">
    <property type="term" value="C:cytoplasm"/>
    <property type="evidence" value="ECO:0007669"/>
    <property type="project" value="UniProtKB-SubCell"/>
</dbReference>
<dbReference type="GO" id="GO:0008108">
    <property type="term" value="F:UDP-glucose:hexose-1-phosphate uridylyltransferase activity"/>
    <property type="evidence" value="ECO:0007669"/>
    <property type="project" value="UniProtKB-UniRule"/>
</dbReference>
<dbReference type="GO" id="GO:0006012">
    <property type="term" value="P:galactose metabolic process"/>
    <property type="evidence" value="ECO:0007669"/>
    <property type="project" value="UniProtKB-UniRule"/>
</dbReference>
<dbReference type="HAMAP" id="MF_00571">
    <property type="entry name" value="GalP_UDP_trans"/>
    <property type="match status" value="1"/>
</dbReference>
<dbReference type="InterPro" id="IPR000766">
    <property type="entry name" value="GalP_uridyl_Trfase_II"/>
</dbReference>
<dbReference type="InterPro" id="IPR023425">
    <property type="entry name" value="GalP_uridyl_Trfase_II_CS"/>
</dbReference>
<dbReference type="InterPro" id="IPR005850">
    <property type="entry name" value="GalP_Utransf_C"/>
</dbReference>
<dbReference type="InterPro" id="IPR005849">
    <property type="entry name" value="GalP_Utransf_N"/>
</dbReference>
<dbReference type="NCBIfam" id="TIGR01239">
    <property type="entry name" value="galT_2"/>
    <property type="match status" value="1"/>
</dbReference>
<dbReference type="NCBIfam" id="NF003629">
    <property type="entry name" value="PRK05270.1-2"/>
    <property type="match status" value="1"/>
</dbReference>
<dbReference type="NCBIfam" id="NF003633">
    <property type="entry name" value="PRK05270.2-2"/>
    <property type="match status" value="1"/>
</dbReference>
<dbReference type="NCBIfam" id="NF003634">
    <property type="entry name" value="PRK05270.2-3"/>
    <property type="match status" value="1"/>
</dbReference>
<dbReference type="PANTHER" id="PTHR39191:SF1">
    <property type="entry name" value="DUF4922 DOMAIN-CONTAINING PROTEIN"/>
    <property type="match status" value="1"/>
</dbReference>
<dbReference type="PANTHER" id="PTHR39191">
    <property type="entry name" value="GALACTOSE-1-PHOSPHATE URIDYLYLTRANSFERASE"/>
    <property type="match status" value="1"/>
</dbReference>
<dbReference type="Pfam" id="PF02744">
    <property type="entry name" value="GalP_UDP_tr_C"/>
    <property type="match status" value="1"/>
</dbReference>
<dbReference type="Pfam" id="PF01087">
    <property type="entry name" value="GalP_UDP_transf"/>
    <property type="match status" value="1"/>
</dbReference>
<dbReference type="PIRSF" id="PIRSF006005">
    <property type="entry name" value="GalT_BS"/>
    <property type="match status" value="1"/>
</dbReference>
<dbReference type="PROSITE" id="PS01163">
    <property type="entry name" value="GAL_P_UDP_TRANSF_II"/>
    <property type="match status" value="1"/>
</dbReference>
<proteinExistence type="inferred from homology"/>
<protein>
    <recommendedName>
        <fullName evidence="1">Galactose-1-phosphate uridylyltransferase</fullName>
        <shortName evidence="1">Gal-1-P uridylyltransferase</shortName>
        <ecNumber evidence="1">2.7.7.12</ecNumber>
    </recommendedName>
    <alternativeName>
        <fullName evidence="1">UDP-glucose--hexose-1-phosphate uridylyltransferase</fullName>
    </alternativeName>
</protein>
<feature type="chain" id="PRO_1000025024" description="Galactose-1-phosphate uridylyltransferase">
    <location>
        <begin position="1"/>
        <end position="493"/>
    </location>
</feature>
<evidence type="ECO:0000255" key="1">
    <source>
        <dbReference type="HAMAP-Rule" id="MF_00571"/>
    </source>
</evidence>
<gene>
    <name evidence="1" type="primary">galT</name>
    <name type="ordered locus">LACR_2243</name>
</gene>
<keyword id="KW-0119">Carbohydrate metabolism</keyword>
<keyword id="KW-0963">Cytoplasm</keyword>
<keyword id="KW-0299">Galactose metabolism</keyword>
<keyword id="KW-0548">Nucleotidyltransferase</keyword>
<keyword id="KW-0808">Transferase</keyword>
<name>GALT_LACLS</name>
<sequence>MSIYQSIQDFISLALQNGTIEPLDELYHRNQLLHFLGLNDWAEVDKEVHETNSLILMDQLLAIANENNVIAKGQDEFYEAALMNFMTPRPSKINHDFWEKYQASPDAATQYFYELAQQVNQVKTRDIARNIAFSHLTKYGKLEITINLSKPEKDPKAIAAAKLVKASSYPACQLCLENEGFYGLGNKPARSNHRIIQVSINGEDWGFQYSPYAYFNEHSILLNAKHQPMEINKRAFDNLLGFLDKFPNYMIGSNADLPIVGGSILTHDHYQAGRHDFPMAKAELRETIELAHFPEVSCGIVNWPMSVLRLASENQVELSKAADDFLKKWQVYSDESLQIKAKSTDGTPHHTITPIARIRDGKYELDLVLRDNNTNEKYPDGIFHPHPALHHIKKENIGLIEVMGLAILPARLETELLEVERYLLNQDNQMNEIHKAWAEQLKNEEHFTRETVHATVQGAVGEVFEEVLKDAGVFKDTQEGHEGFRKFIDFVNQ</sequence>
<organism>
    <name type="scientific">Lactococcus lactis subsp. cremoris (strain SK11)</name>
    <dbReference type="NCBI Taxonomy" id="272622"/>
    <lineage>
        <taxon>Bacteria</taxon>
        <taxon>Bacillati</taxon>
        <taxon>Bacillota</taxon>
        <taxon>Bacilli</taxon>
        <taxon>Lactobacillales</taxon>
        <taxon>Streptococcaceae</taxon>
        <taxon>Lactococcus</taxon>
        <taxon>Lactococcus cremoris subsp. cremoris</taxon>
    </lineage>
</organism>
<comment type="catalytic activity">
    <reaction evidence="1">
        <text>alpha-D-galactose 1-phosphate + UDP-alpha-D-glucose = alpha-D-glucose 1-phosphate + UDP-alpha-D-galactose</text>
        <dbReference type="Rhea" id="RHEA:13989"/>
        <dbReference type="ChEBI" id="CHEBI:58336"/>
        <dbReference type="ChEBI" id="CHEBI:58601"/>
        <dbReference type="ChEBI" id="CHEBI:58885"/>
        <dbReference type="ChEBI" id="CHEBI:66914"/>
        <dbReference type="EC" id="2.7.7.12"/>
    </reaction>
</comment>
<comment type="pathway">
    <text evidence="1">Carbohydrate metabolism; galactose metabolism.</text>
</comment>
<comment type="subcellular location">
    <subcellularLocation>
        <location evidence="1">Cytoplasm</location>
    </subcellularLocation>
</comment>
<comment type="similarity">
    <text evidence="1">Belongs to the galactose-1-phosphate uridylyltransferase type 2 family.</text>
</comment>
<reference key="1">
    <citation type="journal article" date="2006" name="Proc. Natl. Acad. Sci. U.S.A.">
        <title>Comparative genomics of the lactic acid bacteria.</title>
        <authorList>
            <person name="Makarova K.S."/>
            <person name="Slesarev A."/>
            <person name="Wolf Y.I."/>
            <person name="Sorokin A."/>
            <person name="Mirkin B."/>
            <person name="Koonin E.V."/>
            <person name="Pavlov A."/>
            <person name="Pavlova N."/>
            <person name="Karamychev V."/>
            <person name="Polouchine N."/>
            <person name="Shakhova V."/>
            <person name="Grigoriev I."/>
            <person name="Lou Y."/>
            <person name="Rohksar D."/>
            <person name="Lucas S."/>
            <person name="Huang K."/>
            <person name="Goodstein D.M."/>
            <person name="Hawkins T."/>
            <person name="Plengvidhya V."/>
            <person name="Welker D."/>
            <person name="Hughes J."/>
            <person name="Goh Y."/>
            <person name="Benson A."/>
            <person name="Baldwin K."/>
            <person name="Lee J.-H."/>
            <person name="Diaz-Muniz I."/>
            <person name="Dosti B."/>
            <person name="Smeianov V."/>
            <person name="Wechter W."/>
            <person name="Barabote R."/>
            <person name="Lorca G."/>
            <person name="Altermann E."/>
            <person name="Barrangou R."/>
            <person name="Ganesan B."/>
            <person name="Xie Y."/>
            <person name="Rawsthorne H."/>
            <person name="Tamir D."/>
            <person name="Parker C."/>
            <person name="Breidt F."/>
            <person name="Broadbent J.R."/>
            <person name="Hutkins R."/>
            <person name="O'Sullivan D."/>
            <person name="Steele J."/>
            <person name="Unlu G."/>
            <person name="Saier M.H. Jr."/>
            <person name="Klaenhammer T."/>
            <person name="Richardson P."/>
            <person name="Kozyavkin S."/>
            <person name="Weimer B.C."/>
            <person name="Mills D.A."/>
        </authorList>
    </citation>
    <scope>NUCLEOTIDE SEQUENCE [LARGE SCALE GENOMIC DNA]</scope>
    <source>
        <strain>SK11</strain>
    </source>
</reference>
<accession>Q02WH3</accession>